<comment type="subunit">
    <text>Part of the 30S ribosomal subunit.</text>
</comment>
<comment type="subcellular location">
    <subcellularLocation>
        <location>Plastid</location>
        <location>Chloroplast</location>
    </subcellularLocation>
</comment>
<comment type="similarity">
    <text evidence="1">Belongs to the bacterial ribosomal protein bS18 family.</text>
</comment>
<comment type="sequence caution" evidence="1">
    <conflict type="erroneous initiation">
        <sequence resource="EMBL-CDS" id="BAA04344"/>
    </conflict>
</comment>
<protein>
    <recommendedName>
        <fullName evidence="1">Small ribosomal subunit protein bS18c</fullName>
    </recommendedName>
    <alternativeName>
        <fullName>30S ribosomal protein S18, chloroplastic</fullName>
    </alternativeName>
</protein>
<feature type="chain" id="PRO_0000111305" description="Small ribosomal subunit protein bS18c">
    <location>
        <begin position="1"/>
        <end position="96"/>
    </location>
</feature>
<geneLocation type="chloroplast"/>
<gene>
    <name type="primary">rps18</name>
</gene>
<sequence>MDKPKQSFRRHFKPIRRRFKPIRRYLKPIRRHLSPIRSGDRIDYKNMSLISRFISEQGKILSGRVNRLTSKQQRLMTNAIKRARILSLLPFLYNEN</sequence>
<evidence type="ECO:0000305" key="1"/>
<organism>
    <name type="scientific">Pinus thunbergii</name>
    <name type="common">Japanese black pine</name>
    <name type="synonym">Pinus thunbergiana</name>
    <dbReference type="NCBI Taxonomy" id="3350"/>
    <lineage>
        <taxon>Eukaryota</taxon>
        <taxon>Viridiplantae</taxon>
        <taxon>Streptophyta</taxon>
        <taxon>Embryophyta</taxon>
        <taxon>Tracheophyta</taxon>
        <taxon>Spermatophyta</taxon>
        <taxon>Pinopsida</taxon>
        <taxon>Pinidae</taxon>
        <taxon>Conifers I</taxon>
        <taxon>Pinales</taxon>
        <taxon>Pinaceae</taxon>
        <taxon>Pinus</taxon>
        <taxon>Pinus subgen. Pinus</taxon>
    </lineage>
</organism>
<keyword id="KW-0150">Chloroplast</keyword>
<keyword id="KW-0934">Plastid</keyword>
<keyword id="KW-0687">Ribonucleoprotein</keyword>
<keyword id="KW-0689">Ribosomal protein</keyword>
<keyword id="KW-0694">RNA-binding</keyword>
<keyword id="KW-0699">rRNA-binding</keyword>
<name>RR18_PINTH</name>
<reference key="1">
    <citation type="journal article" date="1994" name="Proc. Natl. Acad. Sci. U.S.A.">
        <title>Loss of all ndh genes as determined by sequencing the entire chloroplast genome of the black pine Pinus thunbergii.</title>
        <authorList>
            <person name="Wakasugi T."/>
            <person name="Tsudzuki J."/>
            <person name="Ito S."/>
            <person name="Nakashima K."/>
            <person name="Tsudzuki T."/>
            <person name="Sugiura M."/>
        </authorList>
    </citation>
    <scope>NUCLEOTIDE SEQUENCE [LARGE SCALE GENOMIC DNA]</scope>
</reference>
<accession>P52763</accession>
<proteinExistence type="inferred from homology"/>
<dbReference type="EMBL" id="D17510">
    <property type="protein sequence ID" value="BAA04344.1"/>
    <property type="status" value="ALT_INIT"/>
    <property type="molecule type" value="Genomic_DNA"/>
</dbReference>
<dbReference type="PIR" id="T07466">
    <property type="entry name" value="T07466"/>
</dbReference>
<dbReference type="RefSeq" id="NP_042387.2">
    <property type="nucleotide sequence ID" value="NC_001631.1"/>
</dbReference>
<dbReference type="SMR" id="P52763"/>
<dbReference type="GeneID" id="809063"/>
<dbReference type="GO" id="GO:0009507">
    <property type="term" value="C:chloroplast"/>
    <property type="evidence" value="ECO:0007669"/>
    <property type="project" value="UniProtKB-SubCell"/>
</dbReference>
<dbReference type="GO" id="GO:0005763">
    <property type="term" value="C:mitochondrial small ribosomal subunit"/>
    <property type="evidence" value="ECO:0007669"/>
    <property type="project" value="TreeGrafter"/>
</dbReference>
<dbReference type="GO" id="GO:0070181">
    <property type="term" value="F:small ribosomal subunit rRNA binding"/>
    <property type="evidence" value="ECO:0007669"/>
    <property type="project" value="TreeGrafter"/>
</dbReference>
<dbReference type="GO" id="GO:0003735">
    <property type="term" value="F:structural constituent of ribosome"/>
    <property type="evidence" value="ECO:0007669"/>
    <property type="project" value="InterPro"/>
</dbReference>
<dbReference type="GO" id="GO:0006412">
    <property type="term" value="P:translation"/>
    <property type="evidence" value="ECO:0007669"/>
    <property type="project" value="UniProtKB-UniRule"/>
</dbReference>
<dbReference type="FunFam" id="4.10.640.10:FF:000002">
    <property type="entry name" value="30S ribosomal protein S18, chloroplastic"/>
    <property type="match status" value="1"/>
</dbReference>
<dbReference type="Gene3D" id="4.10.640.10">
    <property type="entry name" value="Ribosomal protein S18"/>
    <property type="match status" value="1"/>
</dbReference>
<dbReference type="HAMAP" id="MF_00270">
    <property type="entry name" value="Ribosomal_bS18"/>
    <property type="match status" value="1"/>
</dbReference>
<dbReference type="InterPro" id="IPR001648">
    <property type="entry name" value="Ribosomal_bS18"/>
</dbReference>
<dbReference type="InterPro" id="IPR018275">
    <property type="entry name" value="Ribosomal_bS18_CS"/>
</dbReference>
<dbReference type="InterPro" id="IPR036870">
    <property type="entry name" value="Ribosomal_bS18_sf"/>
</dbReference>
<dbReference type="NCBIfam" id="TIGR00165">
    <property type="entry name" value="S18"/>
    <property type="match status" value="1"/>
</dbReference>
<dbReference type="PANTHER" id="PTHR13479">
    <property type="entry name" value="30S RIBOSOMAL PROTEIN S18"/>
    <property type="match status" value="1"/>
</dbReference>
<dbReference type="PANTHER" id="PTHR13479:SF40">
    <property type="entry name" value="SMALL RIBOSOMAL SUBUNIT PROTEIN BS18M"/>
    <property type="match status" value="1"/>
</dbReference>
<dbReference type="Pfam" id="PF01084">
    <property type="entry name" value="Ribosomal_S18"/>
    <property type="match status" value="1"/>
</dbReference>
<dbReference type="PRINTS" id="PR00974">
    <property type="entry name" value="RIBOSOMALS18"/>
</dbReference>
<dbReference type="SUPFAM" id="SSF46911">
    <property type="entry name" value="Ribosomal protein S18"/>
    <property type="match status" value="1"/>
</dbReference>
<dbReference type="PROSITE" id="PS00057">
    <property type="entry name" value="RIBOSOMAL_S18"/>
    <property type="match status" value="1"/>
</dbReference>